<gene>
    <name evidence="6" type="primary">TFIIS</name>
    <name evidence="7" type="synonym">RDO2</name>
    <name evidence="9" type="ordered locus">At2g38560</name>
</gene>
<evidence type="ECO:0000255" key="1">
    <source>
        <dbReference type="PROSITE-ProRule" id="PRU00472"/>
    </source>
</evidence>
<evidence type="ECO:0000255" key="2">
    <source>
        <dbReference type="PROSITE-ProRule" id="PRU00649"/>
    </source>
</evidence>
<evidence type="ECO:0000255" key="3">
    <source>
        <dbReference type="PROSITE-ProRule" id="PRU00651"/>
    </source>
</evidence>
<evidence type="ECO:0000269" key="4">
    <source>
    </source>
</evidence>
<evidence type="ECO:0000269" key="5">
    <source>
    </source>
</evidence>
<evidence type="ECO:0000303" key="6">
    <source>
    </source>
</evidence>
<evidence type="ECO:0000303" key="7">
    <source>
    </source>
</evidence>
<evidence type="ECO:0000305" key="8"/>
<evidence type="ECO:0000312" key="9">
    <source>
        <dbReference type="Araport" id="AT2G38560"/>
    </source>
</evidence>
<evidence type="ECO:0007744" key="10">
    <source>
    </source>
</evidence>
<evidence type="ECO:0007829" key="11">
    <source>
        <dbReference type="PDB" id="8H6R"/>
    </source>
</evidence>
<accession>Q9ZVH8</accession>
<accession>Q8VXZ6</accession>
<organism>
    <name type="scientific">Arabidopsis thaliana</name>
    <name type="common">Mouse-ear cress</name>
    <dbReference type="NCBI Taxonomy" id="3702"/>
    <lineage>
        <taxon>Eukaryota</taxon>
        <taxon>Viridiplantae</taxon>
        <taxon>Streptophyta</taxon>
        <taxon>Embryophyta</taxon>
        <taxon>Tracheophyta</taxon>
        <taxon>Spermatophyta</taxon>
        <taxon>Magnoliopsida</taxon>
        <taxon>eudicotyledons</taxon>
        <taxon>Gunneridae</taxon>
        <taxon>Pentapetalae</taxon>
        <taxon>rosids</taxon>
        <taxon>malvids</taxon>
        <taxon>Brassicales</taxon>
        <taxon>Brassicaceae</taxon>
        <taxon>Camelineae</taxon>
        <taxon>Arabidopsis</taxon>
    </lineage>
</organism>
<keyword id="KW-0002">3D-structure</keyword>
<keyword id="KW-0007">Acetylation</keyword>
<keyword id="KW-0251">Elongation factor</keyword>
<keyword id="KW-0479">Metal-binding</keyword>
<keyword id="KW-0539">Nucleus</keyword>
<keyword id="KW-0648">Protein biosynthesis</keyword>
<keyword id="KW-1185">Reference proteome</keyword>
<keyword id="KW-0862">Zinc</keyword>
<keyword id="KW-0863">Zinc-finger</keyword>
<feature type="chain" id="PRO_0000432766" description="Transcription elongation factor TFIIS">
    <location>
        <begin position="1"/>
        <end position="378"/>
    </location>
</feature>
<feature type="domain" description="TFIIS N-terminal" evidence="2">
    <location>
        <begin position="10"/>
        <end position="89"/>
    </location>
</feature>
<feature type="domain" description="TFIIS central" evidence="3">
    <location>
        <begin position="210"/>
        <end position="333"/>
    </location>
</feature>
<feature type="zinc finger region" description="TFIIS-type" evidence="1">
    <location>
        <begin position="336"/>
        <end position="376"/>
    </location>
</feature>
<feature type="binding site" evidence="1">
    <location>
        <position position="340"/>
    </location>
    <ligand>
        <name>Zn(2+)</name>
        <dbReference type="ChEBI" id="CHEBI:29105"/>
    </ligand>
</feature>
<feature type="binding site" evidence="1">
    <location>
        <position position="343"/>
    </location>
    <ligand>
        <name>Zn(2+)</name>
        <dbReference type="ChEBI" id="CHEBI:29105"/>
    </ligand>
</feature>
<feature type="binding site" evidence="1">
    <location>
        <position position="368"/>
    </location>
    <ligand>
        <name>Zn(2+)</name>
        <dbReference type="ChEBI" id="CHEBI:29105"/>
    </ligand>
</feature>
<feature type="binding site" evidence="1">
    <location>
        <position position="371"/>
    </location>
    <ligand>
        <name>Zn(2+)</name>
        <dbReference type="ChEBI" id="CHEBI:29105"/>
    </ligand>
</feature>
<feature type="modified residue" description="N-acetylmethionine" evidence="10">
    <location>
        <position position="1"/>
    </location>
</feature>
<feature type="sequence conflict" description="In Ref. 4; AAL67018." evidence="8" ref="4">
    <original>V</original>
    <variation>M</variation>
    <location>
        <position position="219"/>
    </location>
</feature>
<feature type="helix" evidence="11">
    <location>
        <begin position="2"/>
        <end position="21"/>
    </location>
</feature>
<feature type="helix" evidence="11">
    <location>
        <begin position="29"/>
        <end position="42"/>
    </location>
</feature>
<feature type="helix" evidence="11">
    <location>
        <begin position="48"/>
        <end position="54"/>
    </location>
</feature>
<feature type="helix" evidence="11">
    <location>
        <begin position="56"/>
        <end position="64"/>
    </location>
</feature>
<feature type="helix" evidence="11">
    <location>
        <begin position="69"/>
        <end position="86"/>
    </location>
</feature>
<dbReference type="EMBL" id="AC005499">
    <property type="protein sequence ID" value="AAC67362.1"/>
    <property type="molecule type" value="Genomic_DNA"/>
</dbReference>
<dbReference type="EMBL" id="CP002685">
    <property type="protein sequence ID" value="AEC09550.1"/>
    <property type="molecule type" value="Genomic_DNA"/>
</dbReference>
<dbReference type="EMBL" id="AK117557">
    <property type="protein sequence ID" value="BAC42218.1"/>
    <property type="molecule type" value="mRNA"/>
</dbReference>
<dbReference type="EMBL" id="AY074322">
    <property type="protein sequence ID" value="AAL67018.1"/>
    <property type="molecule type" value="mRNA"/>
</dbReference>
<dbReference type="EMBL" id="AY150517">
    <property type="protein sequence ID" value="AAN13033.1"/>
    <property type="molecule type" value="mRNA"/>
</dbReference>
<dbReference type="PIR" id="E84806">
    <property type="entry name" value="E84806"/>
</dbReference>
<dbReference type="RefSeq" id="NP_181390.1">
    <property type="nucleotide sequence ID" value="NM_129413.4"/>
</dbReference>
<dbReference type="PDB" id="8H6R">
    <property type="method" value="X-ray"/>
    <property type="resolution" value="2.60 A"/>
    <property type="chains" value="A=1-87"/>
</dbReference>
<dbReference type="PDBsum" id="8H6R"/>
<dbReference type="SMR" id="Q9ZVH8"/>
<dbReference type="FunCoup" id="Q9ZVH8">
    <property type="interactions" value="4084"/>
</dbReference>
<dbReference type="IntAct" id="Q9ZVH8">
    <property type="interactions" value="1"/>
</dbReference>
<dbReference type="STRING" id="3702.Q9ZVH8"/>
<dbReference type="iPTMnet" id="Q9ZVH8"/>
<dbReference type="PaxDb" id="3702-AT2G38560.1"/>
<dbReference type="ProteomicsDB" id="235054"/>
<dbReference type="EnsemblPlants" id="AT2G38560.1">
    <property type="protein sequence ID" value="AT2G38560.1"/>
    <property type="gene ID" value="AT2G38560"/>
</dbReference>
<dbReference type="GeneID" id="818438"/>
<dbReference type="Gramene" id="AT2G38560.1">
    <property type="protein sequence ID" value="AT2G38560.1"/>
    <property type="gene ID" value="AT2G38560"/>
</dbReference>
<dbReference type="KEGG" id="ath:AT2G38560"/>
<dbReference type="Araport" id="AT2G38560"/>
<dbReference type="TAIR" id="AT2G38560">
    <property type="gene designation" value="TFIIS"/>
</dbReference>
<dbReference type="eggNOG" id="KOG1105">
    <property type="taxonomic scope" value="Eukaryota"/>
</dbReference>
<dbReference type="HOGENOM" id="CLU_037637_0_0_1"/>
<dbReference type="InParanoid" id="Q9ZVH8"/>
<dbReference type="OMA" id="DACDPFR"/>
<dbReference type="PhylomeDB" id="Q9ZVH8"/>
<dbReference type="CD-CODE" id="4299E36E">
    <property type="entry name" value="Nucleolus"/>
</dbReference>
<dbReference type="PRO" id="PR:Q9ZVH8"/>
<dbReference type="Proteomes" id="UP000006548">
    <property type="component" value="Chromosome 2"/>
</dbReference>
<dbReference type="ExpressionAtlas" id="Q9ZVH8">
    <property type="expression patterns" value="baseline and differential"/>
</dbReference>
<dbReference type="GO" id="GO:0005634">
    <property type="term" value="C:nucleus"/>
    <property type="evidence" value="ECO:0000314"/>
    <property type="project" value="TAIR"/>
</dbReference>
<dbReference type="GO" id="GO:0003676">
    <property type="term" value="F:nucleic acid binding"/>
    <property type="evidence" value="ECO:0007669"/>
    <property type="project" value="InterPro"/>
</dbReference>
<dbReference type="GO" id="GO:0003746">
    <property type="term" value="F:translation elongation factor activity"/>
    <property type="evidence" value="ECO:0007669"/>
    <property type="project" value="UniProtKB-KW"/>
</dbReference>
<dbReference type="GO" id="GO:0008270">
    <property type="term" value="F:zinc ion binding"/>
    <property type="evidence" value="ECO:0007669"/>
    <property type="project" value="UniProtKB-KW"/>
</dbReference>
<dbReference type="GO" id="GO:0009910">
    <property type="term" value="P:negative regulation of flower development"/>
    <property type="evidence" value="ECO:0000315"/>
    <property type="project" value="TAIR"/>
</dbReference>
<dbReference type="GO" id="GO:0034243">
    <property type="term" value="P:regulation of transcription elongation by RNA polymerase II"/>
    <property type="evidence" value="ECO:0000315"/>
    <property type="project" value="TAIR"/>
</dbReference>
<dbReference type="GO" id="GO:0009739">
    <property type="term" value="P:response to gibberellin"/>
    <property type="evidence" value="ECO:0000315"/>
    <property type="project" value="TAIR"/>
</dbReference>
<dbReference type="GO" id="GO:0010162">
    <property type="term" value="P:seed dormancy process"/>
    <property type="evidence" value="ECO:0000315"/>
    <property type="project" value="TAIR"/>
</dbReference>
<dbReference type="GO" id="GO:0009845">
    <property type="term" value="P:seed germination"/>
    <property type="evidence" value="ECO:0000315"/>
    <property type="project" value="TAIR"/>
</dbReference>
<dbReference type="GO" id="GO:0006368">
    <property type="term" value="P:transcription elongation by RNA polymerase II"/>
    <property type="evidence" value="ECO:0007669"/>
    <property type="project" value="InterPro"/>
</dbReference>
<dbReference type="CDD" id="cd00183">
    <property type="entry name" value="TFIIS_I"/>
    <property type="match status" value="1"/>
</dbReference>
<dbReference type="CDD" id="cd13749">
    <property type="entry name" value="Zn-ribbon_TFIIS"/>
    <property type="match status" value="1"/>
</dbReference>
<dbReference type="FunFam" id="2.20.25.10:FF:000001">
    <property type="entry name" value="Probable Transcription elongation factor S-II"/>
    <property type="match status" value="1"/>
</dbReference>
<dbReference type="FunFam" id="1.20.930.10:FF:000027">
    <property type="entry name" value="Transcription elongation factor TFIIS"/>
    <property type="match status" value="1"/>
</dbReference>
<dbReference type="Gene3D" id="2.20.25.10">
    <property type="match status" value="1"/>
</dbReference>
<dbReference type="Gene3D" id="1.20.930.10">
    <property type="entry name" value="Conserved domain common to transcription factors TFIIS, elongin A, CRSP70"/>
    <property type="match status" value="1"/>
</dbReference>
<dbReference type="Gene3D" id="1.10.472.30">
    <property type="entry name" value="Transcription elongation factor S-II, central domain"/>
    <property type="match status" value="1"/>
</dbReference>
<dbReference type="InterPro" id="IPR035100">
    <property type="entry name" value="TF_IIS-typ"/>
</dbReference>
<dbReference type="InterPro" id="IPR003617">
    <property type="entry name" value="TFIIS/CRSP70_N_sub"/>
</dbReference>
<dbReference type="InterPro" id="IPR035441">
    <property type="entry name" value="TFIIS/LEDGF_dom_sf"/>
</dbReference>
<dbReference type="InterPro" id="IPR003618">
    <property type="entry name" value="TFIIS_cen_dom"/>
</dbReference>
<dbReference type="InterPro" id="IPR036575">
    <property type="entry name" value="TFIIS_cen_dom_sf"/>
</dbReference>
<dbReference type="InterPro" id="IPR017923">
    <property type="entry name" value="TFIIS_N"/>
</dbReference>
<dbReference type="InterPro" id="IPR006289">
    <property type="entry name" value="TFSII"/>
</dbReference>
<dbReference type="InterPro" id="IPR001222">
    <property type="entry name" value="Znf_TFIIS"/>
</dbReference>
<dbReference type="NCBIfam" id="TIGR01385">
    <property type="entry name" value="TFSII"/>
    <property type="match status" value="1"/>
</dbReference>
<dbReference type="PANTHER" id="PTHR11477:SF0">
    <property type="entry name" value="IP08861P-RELATED"/>
    <property type="match status" value="1"/>
</dbReference>
<dbReference type="PANTHER" id="PTHR11477">
    <property type="entry name" value="TRANSCRIPTION FACTOR S-II ZINC FINGER DOMAIN-CONTAINING PROTEIN"/>
    <property type="match status" value="1"/>
</dbReference>
<dbReference type="Pfam" id="PF08711">
    <property type="entry name" value="Med26"/>
    <property type="match status" value="1"/>
</dbReference>
<dbReference type="Pfam" id="PF07500">
    <property type="entry name" value="TFIIS_M"/>
    <property type="match status" value="1"/>
</dbReference>
<dbReference type="Pfam" id="PF01096">
    <property type="entry name" value="Zn_ribbon_TFIIS"/>
    <property type="match status" value="1"/>
</dbReference>
<dbReference type="PIRSF" id="PIRSF006704">
    <property type="entry name" value="TF_IIS"/>
    <property type="match status" value="1"/>
</dbReference>
<dbReference type="SMART" id="SM00510">
    <property type="entry name" value="TFS2M"/>
    <property type="match status" value="1"/>
</dbReference>
<dbReference type="SMART" id="SM00509">
    <property type="entry name" value="TFS2N"/>
    <property type="match status" value="1"/>
</dbReference>
<dbReference type="SMART" id="SM00440">
    <property type="entry name" value="ZnF_C2C2"/>
    <property type="match status" value="1"/>
</dbReference>
<dbReference type="SUPFAM" id="SSF47676">
    <property type="entry name" value="Conserved domain common to transcription factors TFIIS, elongin A, CRSP70"/>
    <property type="match status" value="1"/>
</dbReference>
<dbReference type="SUPFAM" id="SSF46942">
    <property type="entry name" value="Elongation factor TFIIS domain 2"/>
    <property type="match status" value="1"/>
</dbReference>
<dbReference type="SUPFAM" id="SSF57783">
    <property type="entry name" value="Zinc beta-ribbon"/>
    <property type="match status" value="1"/>
</dbReference>
<dbReference type="PROSITE" id="PS51321">
    <property type="entry name" value="TFIIS_CENTRAL"/>
    <property type="match status" value="1"/>
</dbReference>
<dbReference type="PROSITE" id="PS51319">
    <property type="entry name" value="TFIIS_N"/>
    <property type="match status" value="1"/>
</dbReference>
<dbReference type="PROSITE" id="PS00466">
    <property type="entry name" value="ZF_TFIIS_1"/>
    <property type="match status" value="1"/>
</dbReference>
<dbReference type="PROSITE" id="PS51133">
    <property type="entry name" value="ZF_TFIIS_2"/>
    <property type="match status" value="1"/>
</dbReference>
<comment type="function">
    <text evidence="4 5 8">Necessary for efficient RNA polymerase II transcription elongation past template-encoded arresting sites (Probable). Involved in the control of seed dormancy and germination (PubMed:19150360, PubMed:21799800).</text>
</comment>
<comment type="subcellular location">
    <subcellularLocation>
        <location evidence="2 4">Nucleus</location>
    </subcellularLocation>
</comment>
<comment type="tissue specificity">
    <text evidence="4">Expressed in roots, leaves and flowers.</text>
</comment>
<comment type="disruption phenotype">
    <text evidence="4 5">Reduced seed dormancy and increased germination rate of freshly harvested seeds (PubMed:19150360, PubMed:21799800). Early flowering (PubMed:19150360).</text>
</comment>
<name>RDO2_ARATH</name>
<protein>
    <recommendedName>
        <fullName evidence="8">Transcription elongation factor TFIIS</fullName>
    </recommendedName>
    <alternativeName>
        <fullName evidence="7">Protein REDUCED DORMANCY 2</fullName>
    </alternativeName>
</protein>
<proteinExistence type="evidence at protein level"/>
<sequence>MESDLIDLFEGAKKAADAAALDGVTSSGPEVSQCIDALKQLKKFPVTYDTLVATQVGKKLRSLAKHPVEDIKSVATDLLEIWKKVVIEETAKAKKTEGTNGCKEAKVNKMDVEKPSNPAPVKVQKLQRGDSAKSIKVERKEPDNKVVTGVKIERKVPDIKVTNGTKIDYRGQAVKDEKVSKDNQSSMKAPAKAANAPPKLTAMLKCNDPVRDKIRELLVEALCRVAGEADDYERESVNASDPLRVAVSVESLMFEKLGRSTGAQKLKYRSIMFNLRDSNNPDLRRRVLTGEISPEKLITLSAEDMASDKRKQENNQIKEKALFDCERGLAAKASTDQFKCGRCGQRKCTYYQMQTRSADEPMTTYVTCVNCDNHWKFC</sequence>
<reference key="1">
    <citation type="journal article" date="1999" name="Nature">
        <title>Sequence and analysis of chromosome 2 of the plant Arabidopsis thaliana.</title>
        <authorList>
            <person name="Lin X."/>
            <person name="Kaul S."/>
            <person name="Rounsley S.D."/>
            <person name="Shea T.P."/>
            <person name="Benito M.-I."/>
            <person name="Town C.D."/>
            <person name="Fujii C.Y."/>
            <person name="Mason T.M."/>
            <person name="Bowman C.L."/>
            <person name="Barnstead M.E."/>
            <person name="Feldblyum T.V."/>
            <person name="Buell C.R."/>
            <person name="Ketchum K.A."/>
            <person name="Lee J.J."/>
            <person name="Ronning C.M."/>
            <person name="Koo H.L."/>
            <person name="Moffat K.S."/>
            <person name="Cronin L.A."/>
            <person name="Shen M."/>
            <person name="Pai G."/>
            <person name="Van Aken S."/>
            <person name="Umayam L."/>
            <person name="Tallon L.J."/>
            <person name="Gill J.E."/>
            <person name="Adams M.D."/>
            <person name="Carrera A.J."/>
            <person name="Creasy T.H."/>
            <person name="Goodman H.M."/>
            <person name="Somerville C.R."/>
            <person name="Copenhaver G.P."/>
            <person name="Preuss D."/>
            <person name="Nierman W.C."/>
            <person name="White O."/>
            <person name="Eisen J.A."/>
            <person name="Salzberg S.L."/>
            <person name="Fraser C.M."/>
            <person name="Venter J.C."/>
        </authorList>
    </citation>
    <scope>NUCLEOTIDE SEQUENCE [LARGE SCALE GENOMIC DNA]</scope>
    <source>
        <strain>cv. Columbia</strain>
    </source>
</reference>
<reference key="2">
    <citation type="journal article" date="2017" name="Plant J.">
        <title>Araport11: a complete reannotation of the Arabidopsis thaliana reference genome.</title>
        <authorList>
            <person name="Cheng C.Y."/>
            <person name="Krishnakumar V."/>
            <person name="Chan A.P."/>
            <person name="Thibaud-Nissen F."/>
            <person name="Schobel S."/>
            <person name="Town C.D."/>
        </authorList>
    </citation>
    <scope>GENOME REANNOTATION</scope>
    <source>
        <strain>cv. Columbia</strain>
    </source>
</reference>
<reference key="3">
    <citation type="journal article" date="2002" name="Science">
        <title>Functional annotation of a full-length Arabidopsis cDNA collection.</title>
        <authorList>
            <person name="Seki M."/>
            <person name="Narusaka M."/>
            <person name="Kamiya A."/>
            <person name="Ishida J."/>
            <person name="Satou M."/>
            <person name="Sakurai T."/>
            <person name="Nakajima M."/>
            <person name="Enju A."/>
            <person name="Akiyama K."/>
            <person name="Oono Y."/>
            <person name="Muramatsu M."/>
            <person name="Hayashizaki Y."/>
            <person name="Kawai J."/>
            <person name="Carninci P."/>
            <person name="Itoh M."/>
            <person name="Ishii Y."/>
            <person name="Arakawa T."/>
            <person name="Shibata K."/>
            <person name="Shinagawa A."/>
            <person name="Shinozaki K."/>
        </authorList>
    </citation>
    <scope>NUCLEOTIDE SEQUENCE [LARGE SCALE MRNA]</scope>
    <source>
        <strain>cv. Columbia</strain>
    </source>
</reference>
<reference key="4">
    <citation type="journal article" date="2003" name="Science">
        <title>Empirical analysis of transcriptional activity in the Arabidopsis genome.</title>
        <authorList>
            <person name="Yamada K."/>
            <person name="Lim J."/>
            <person name="Dale J.M."/>
            <person name="Chen H."/>
            <person name="Shinn P."/>
            <person name="Palm C.J."/>
            <person name="Southwick A.M."/>
            <person name="Wu H.C."/>
            <person name="Kim C.J."/>
            <person name="Nguyen M."/>
            <person name="Pham P.K."/>
            <person name="Cheuk R.F."/>
            <person name="Karlin-Newmann G."/>
            <person name="Liu S.X."/>
            <person name="Lam B."/>
            <person name="Sakano H."/>
            <person name="Wu T."/>
            <person name="Yu G."/>
            <person name="Miranda M."/>
            <person name="Quach H.L."/>
            <person name="Tripp M."/>
            <person name="Chang C.H."/>
            <person name="Lee J.M."/>
            <person name="Toriumi M.J."/>
            <person name="Chan M.M."/>
            <person name="Tang C.C."/>
            <person name="Onodera C.S."/>
            <person name="Deng J.M."/>
            <person name="Akiyama K."/>
            <person name="Ansari Y."/>
            <person name="Arakawa T."/>
            <person name="Banh J."/>
            <person name="Banno F."/>
            <person name="Bowser L."/>
            <person name="Brooks S.Y."/>
            <person name="Carninci P."/>
            <person name="Chao Q."/>
            <person name="Choy N."/>
            <person name="Enju A."/>
            <person name="Goldsmith A.D."/>
            <person name="Gurjal M."/>
            <person name="Hansen N.F."/>
            <person name="Hayashizaki Y."/>
            <person name="Johnson-Hopson C."/>
            <person name="Hsuan V.W."/>
            <person name="Iida K."/>
            <person name="Karnes M."/>
            <person name="Khan S."/>
            <person name="Koesema E."/>
            <person name="Ishida J."/>
            <person name="Jiang P.X."/>
            <person name="Jones T."/>
            <person name="Kawai J."/>
            <person name="Kamiya A."/>
            <person name="Meyers C."/>
            <person name="Nakajima M."/>
            <person name="Narusaka M."/>
            <person name="Seki M."/>
            <person name="Sakurai T."/>
            <person name="Satou M."/>
            <person name="Tamse R."/>
            <person name="Vaysberg M."/>
            <person name="Wallender E.K."/>
            <person name="Wong C."/>
            <person name="Yamamura Y."/>
            <person name="Yuan S."/>
            <person name="Shinozaki K."/>
            <person name="Davis R.W."/>
            <person name="Theologis A."/>
            <person name="Ecker J.R."/>
        </authorList>
    </citation>
    <scope>NUCLEOTIDE SEQUENCE [LARGE SCALE MRNA]</scope>
    <source>
        <strain>cv. Columbia</strain>
    </source>
</reference>
<reference key="5">
    <citation type="journal article" date="2009" name="J. Mol. Biol.">
        <title>Transcript elongation factor TFIIS is involved in arabidopsis seed dormancy.</title>
        <authorList>
            <person name="Grasser M."/>
            <person name="Kane C.M."/>
            <person name="Merkle T."/>
            <person name="Melzer M."/>
            <person name="Emmersen J."/>
            <person name="Grasser K.D."/>
        </authorList>
    </citation>
    <scope>FUNCTION</scope>
    <scope>SUBCELLULAR LOCATION</scope>
    <scope>TISSUE SPECIFICITY</scope>
</reference>
<reference key="6">
    <citation type="journal article" date="2011" name="PLoS ONE">
        <title>Identification of the Arabidopsis REDUCED DORMANCY 2 gene uncovers a role for the polymerase associated factor 1 complex in seed dormancy.</title>
        <authorList>
            <person name="Liu Y."/>
            <person name="Geyer R."/>
            <person name="van Zanten M."/>
            <person name="Carles A."/>
            <person name="Li Y."/>
            <person name="Horold A."/>
            <person name="van Nocker S."/>
            <person name="Soppe W.J."/>
        </authorList>
    </citation>
    <scope>FUNCTION</scope>
    <scope>DISRUPTION PHENOTYPE</scope>
</reference>
<reference key="7">
    <citation type="journal article" date="2012" name="Mol. Cell. Proteomics">
        <title>Comparative large-scale characterisation of plant vs. mammal proteins reveals similar and idiosyncratic N-alpha acetylation features.</title>
        <authorList>
            <person name="Bienvenut W.V."/>
            <person name="Sumpton D."/>
            <person name="Martinez A."/>
            <person name="Lilla S."/>
            <person name="Espagne C."/>
            <person name="Meinnel T."/>
            <person name="Giglione C."/>
        </authorList>
    </citation>
    <scope>ACETYLATION [LARGE SCALE ANALYSIS] AT MET-1</scope>
    <scope>IDENTIFICATION BY MASS SPECTROMETRY [LARGE SCALE ANALYSIS]</scope>
</reference>